<name>XIAO_ORYSJ</name>
<evidence type="ECO:0000250" key="1">
    <source>
        <dbReference type="UniProtKB" id="O22476"/>
    </source>
</evidence>
<evidence type="ECO:0000255" key="2"/>
<evidence type="ECO:0000255" key="3">
    <source>
        <dbReference type="PROSITE-ProRule" id="PRU00159"/>
    </source>
</evidence>
<evidence type="ECO:0000255" key="4">
    <source>
        <dbReference type="PROSITE-ProRule" id="PRU00498"/>
    </source>
</evidence>
<evidence type="ECO:0000256" key="5">
    <source>
        <dbReference type="SAM" id="MobiDB-lite"/>
    </source>
</evidence>
<evidence type="ECO:0000269" key="6">
    <source>
    </source>
</evidence>
<evidence type="ECO:0000303" key="7">
    <source>
    </source>
</evidence>
<evidence type="ECO:0000305" key="8"/>
<evidence type="ECO:0000305" key="9">
    <source>
    </source>
</evidence>
<evidence type="ECO:0000312" key="10">
    <source>
        <dbReference type="EMBL" id="BAS90612.1"/>
    </source>
</evidence>
<evidence type="ECO:0000312" key="11">
    <source>
        <dbReference type="EMBL" id="CAD41303.2"/>
    </source>
</evidence>
<organism>
    <name type="scientific">Oryza sativa subsp. japonica</name>
    <name type="common">Rice</name>
    <dbReference type="NCBI Taxonomy" id="39947"/>
    <lineage>
        <taxon>Eukaryota</taxon>
        <taxon>Viridiplantae</taxon>
        <taxon>Streptophyta</taxon>
        <taxon>Embryophyta</taxon>
        <taxon>Tracheophyta</taxon>
        <taxon>Spermatophyta</taxon>
        <taxon>Magnoliopsida</taxon>
        <taxon>Liliopsida</taxon>
        <taxon>Poales</taxon>
        <taxon>Poaceae</taxon>
        <taxon>BOP clade</taxon>
        <taxon>Oryzoideae</taxon>
        <taxon>Oryzeae</taxon>
        <taxon>Oryzinae</taxon>
        <taxon>Oryza</taxon>
        <taxon>Oryza sativa</taxon>
    </lineage>
</organism>
<protein>
    <recommendedName>
        <fullName evidence="8">Probable inactive leucine-rich repeat receptor kinase XIAO</fullName>
    </recommendedName>
</protein>
<comment type="function">
    <text evidence="6">Functions in the early stages of organ development by regulating cell division rate. Is probably involved in the regulation of a number of cell-cycle genes. May act as regulator of brassinosteroid (BR) signaling and cell-cycle controlling organ growth.</text>
</comment>
<comment type="subcellular location">
    <subcellularLocation>
        <location evidence="8">Cell membrane</location>
        <topology evidence="8">Single-pass type I membrane protein</topology>
    </subcellularLocation>
</comment>
<comment type="tissue specificity">
    <text evidence="6">Expressed in developing culm, coleoptile, primary root, young spikelet, young leaf blade and leaf sheath, floral meristem primordia, stamen primordia, and lemma and palea primordia.</text>
</comment>
<comment type="domain">
    <text evidence="3">The protein kinase domain is predicted to be catalytically inactive.</text>
</comment>
<comment type="disruption phenotype">
    <text evidence="6">Dwarf plants with erect leaves. Reduced organ sizes due to decreased cell numbers resulting from reduced cell division rate.</text>
</comment>
<comment type="miscellaneous">
    <text evidence="9">Xiao means small in Chinese.</text>
</comment>
<comment type="similarity">
    <text evidence="3">Belongs to the protein kinase superfamily. Ser/Thr protein kinase family.</text>
</comment>
<comment type="sequence caution" evidence="8">
    <conflict type="erroneous gene model prediction">
        <sequence resource="EMBL-CDS" id="BAF15542"/>
    </conflict>
</comment>
<comment type="sequence caution" evidence="8">
    <conflict type="erroneous gene model prediction">
        <sequence resource="EMBL-CDS" id="BAS90612"/>
    </conflict>
</comment>
<comment type="sequence caution" evidence="8">
    <conflict type="erroneous gene model prediction">
        <sequence resource="EMBL-CDS" id="CAD41303"/>
    </conflict>
</comment>
<gene>
    <name evidence="7" type="primary">XIAO</name>
    <name evidence="10" type="ordered locus">Os04g0576900</name>
    <name evidence="8" type="ordered locus">LOC_Os04g48760</name>
    <name evidence="11" type="ORF">OSJNBa0020J04.8</name>
</gene>
<dbReference type="EMBL" id="JQ234882">
    <property type="protein sequence ID" value="AEW49518.1"/>
    <property type="molecule type" value="Genomic_DNA"/>
</dbReference>
<dbReference type="EMBL" id="AL606639">
    <property type="protein sequence ID" value="CAD41303.2"/>
    <property type="status" value="ALT_SEQ"/>
    <property type="molecule type" value="Genomic_DNA"/>
</dbReference>
<dbReference type="EMBL" id="AP008210">
    <property type="protein sequence ID" value="BAF15542.1"/>
    <property type="status" value="ALT_SEQ"/>
    <property type="molecule type" value="Genomic_DNA"/>
</dbReference>
<dbReference type="EMBL" id="AP014960">
    <property type="protein sequence ID" value="BAS90612.1"/>
    <property type="status" value="ALT_SEQ"/>
    <property type="molecule type" value="Genomic_DNA"/>
</dbReference>
<dbReference type="RefSeq" id="XP_015633740.1">
    <property type="nucleotide sequence ID" value="XM_015778254.1"/>
</dbReference>
<dbReference type="SMR" id="G9LZD7"/>
<dbReference type="FunCoup" id="G9LZD7">
    <property type="interactions" value="1740"/>
</dbReference>
<dbReference type="STRING" id="39947.G9LZD7"/>
<dbReference type="GlyCosmos" id="G9LZD7">
    <property type="glycosylation" value="17 sites, No reported glycans"/>
</dbReference>
<dbReference type="PaxDb" id="39947-G9LZD7"/>
<dbReference type="GeneID" id="4336741"/>
<dbReference type="KEGG" id="dosa:Os04g0576900"/>
<dbReference type="KEGG" id="osa:4336741"/>
<dbReference type="eggNOG" id="ENOG502QTHE">
    <property type="taxonomic scope" value="Eukaryota"/>
</dbReference>
<dbReference type="InParanoid" id="G9LZD7"/>
<dbReference type="Proteomes" id="UP000000763">
    <property type="component" value="Chromosome 4"/>
</dbReference>
<dbReference type="Proteomes" id="UP000059680">
    <property type="component" value="Chromosome 4"/>
</dbReference>
<dbReference type="GO" id="GO:0005886">
    <property type="term" value="C:plasma membrane"/>
    <property type="evidence" value="ECO:0000318"/>
    <property type="project" value="GO_Central"/>
</dbReference>
<dbReference type="GO" id="GO:0005524">
    <property type="term" value="F:ATP binding"/>
    <property type="evidence" value="ECO:0007669"/>
    <property type="project" value="UniProtKB-KW"/>
</dbReference>
<dbReference type="GO" id="GO:0004672">
    <property type="term" value="F:protein kinase activity"/>
    <property type="evidence" value="ECO:0007669"/>
    <property type="project" value="InterPro"/>
</dbReference>
<dbReference type="GO" id="GO:0009742">
    <property type="term" value="P:brassinosteroid mediated signaling pathway"/>
    <property type="evidence" value="ECO:0007669"/>
    <property type="project" value="UniProtKB-KW"/>
</dbReference>
<dbReference type="GO" id="GO:0090696">
    <property type="term" value="P:post-embryonic plant organ development"/>
    <property type="evidence" value="ECO:0000315"/>
    <property type="project" value="UniProtKB"/>
</dbReference>
<dbReference type="FunFam" id="3.80.10.10:FF:000101">
    <property type="entry name" value="LRR receptor-like serine/threonine-protein kinase ERECTA"/>
    <property type="match status" value="1"/>
</dbReference>
<dbReference type="FunFam" id="3.80.10.10:FF:000111">
    <property type="entry name" value="LRR receptor-like serine/threonine-protein kinase ERECTA"/>
    <property type="match status" value="1"/>
</dbReference>
<dbReference type="FunFam" id="1.10.510.10:FF:000192">
    <property type="entry name" value="LRR receptor-like serine/threonine-protein kinase RPK2"/>
    <property type="match status" value="1"/>
</dbReference>
<dbReference type="FunFam" id="3.80.10.10:FF:000738">
    <property type="entry name" value="Predicted protein"/>
    <property type="match status" value="1"/>
</dbReference>
<dbReference type="FunFam" id="3.80.10.10:FF:000840">
    <property type="entry name" value="Probable inactive leucine-rich repeat receptor kinase XIAO"/>
    <property type="match status" value="1"/>
</dbReference>
<dbReference type="FunFam" id="3.30.200.20:FF:000404">
    <property type="entry name" value="Putative LRR receptor-like serine/threonine-protein kinase"/>
    <property type="match status" value="1"/>
</dbReference>
<dbReference type="FunFam" id="3.80.10.10:FF:000728">
    <property type="entry name" value="Putative LRR receptor-like serine/threonine-protein kinase"/>
    <property type="match status" value="1"/>
</dbReference>
<dbReference type="Gene3D" id="3.30.200.20">
    <property type="entry name" value="Phosphorylase Kinase, domain 1"/>
    <property type="match status" value="1"/>
</dbReference>
<dbReference type="Gene3D" id="3.80.10.10">
    <property type="entry name" value="Ribonuclease Inhibitor"/>
    <property type="match status" value="5"/>
</dbReference>
<dbReference type="Gene3D" id="1.10.510.10">
    <property type="entry name" value="Transferase(Phosphotransferase) domain 1"/>
    <property type="match status" value="1"/>
</dbReference>
<dbReference type="InterPro" id="IPR011009">
    <property type="entry name" value="Kinase-like_dom_sf"/>
</dbReference>
<dbReference type="InterPro" id="IPR001611">
    <property type="entry name" value="Leu-rich_rpt"/>
</dbReference>
<dbReference type="InterPro" id="IPR003591">
    <property type="entry name" value="Leu-rich_rpt_typical-subtyp"/>
</dbReference>
<dbReference type="InterPro" id="IPR032675">
    <property type="entry name" value="LRR_dom_sf"/>
</dbReference>
<dbReference type="InterPro" id="IPR013210">
    <property type="entry name" value="LRR_N_plant-typ"/>
</dbReference>
<dbReference type="InterPro" id="IPR055414">
    <property type="entry name" value="LRR_R13L4/SHOC2-like"/>
</dbReference>
<dbReference type="InterPro" id="IPR050647">
    <property type="entry name" value="Plant_LRR-RLKs"/>
</dbReference>
<dbReference type="InterPro" id="IPR000719">
    <property type="entry name" value="Prot_kinase_dom"/>
</dbReference>
<dbReference type="InterPro" id="IPR008271">
    <property type="entry name" value="Ser/Thr_kinase_AS"/>
</dbReference>
<dbReference type="PANTHER" id="PTHR48056">
    <property type="entry name" value="LRR RECEPTOR-LIKE SERINE/THREONINE-PROTEIN KINASE-RELATED"/>
    <property type="match status" value="1"/>
</dbReference>
<dbReference type="PANTHER" id="PTHR48056:SF28">
    <property type="entry name" value="PROTEIN KINASE DOMAIN-CONTAINING PROTEIN"/>
    <property type="match status" value="1"/>
</dbReference>
<dbReference type="Pfam" id="PF00560">
    <property type="entry name" value="LRR_1"/>
    <property type="match status" value="8"/>
</dbReference>
<dbReference type="Pfam" id="PF23598">
    <property type="entry name" value="LRR_14"/>
    <property type="match status" value="1"/>
</dbReference>
<dbReference type="Pfam" id="PF13855">
    <property type="entry name" value="LRR_8"/>
    <property type="match status" value="1"/>
</dbReference>
<dbReference type="Pfam" id="PF08263">
    <property type="entry name" value="LRRNT_2"/>
    <property type="match status" value="1"/>
</dbReference>
<dbReference type="Pfam" id="PF00069">
    <property type="entry name" value="Pkinase"/>
    <property type="match status" value="1"/>
</dbReference>
<dbReference type="PRINTS" id="PR00019">
    <property type="entry name" value="LEURICHRPT"/>
</dbReference>
<dbReference type="SMART" id="SM00365">
    <property type="entry name" value="LRR_SD22"/>
    <property type="match status" value="7"/>
</dbReference>
<dbReference type="SMART" id="SM00369">
    <property type="entry name" value="LRR_TYP"/>
    <property type="match status" value="11"/>
</dbReference>
<dbReference type="SMART" id="SM00220">
    <property type="entry name" value="S_TKc"/>
    <property type="match status" value="1"/>
</dbReference>
<dbReference type="SUPFAM" id="SSF52058">
    <property type="entry name" value="L domain-like"/>
    <property type="match status" value="1"/>
</dbReference>
<dbReference type="SUPFAM" id="SSF56112">
    <property type="entry name" value="Protein kinase-like (PK-like)"/>
    <property type="match status" value="1"/>
</dbReference>
<dbReference type="SUPFAM" id="SSF52047">
    <property type="entry name" value="RNI-like"/>
    <property type="match status" value="1"/>
</dbReference>
<dbReference type="PROSITE" id="PS51450">
    <property type="entry name" value="LRR"/>
    <property type="match status" value="19"/>
</dbReference>
<dbReference type="PROSITE" id="PS50011">
    <property type="entry name" value="PROTEIN_KINASE_DOM"/>
    <property type="match status" value="1"/>
</dbReference>
<dbReference type="PROSITE" id="PS00108">
    <property type="entry name" value="PROTEIN_KINASE_ST"/>
    <property type="match status" value="1"/>
</dbReference>
<keyword id="KW-0067">ATP-binding</keyword>
<keyword id="KW-1070">Brassinosteroid signaling pathway</keyword>
<keyword id="KW-1003">Cell membrane</keyword>
<keyword id="KW-0325">Glycoprotein</keyword>
<keyword id="KW-0433">Leucine-rich repeat</keyword>
<keyword id="KW-0472">Membrane</keyword>
<keyword id="KW-0547">Nucleotide-binding</keyword>
<keyword id="KW-0675">Receptor</keyword>
<keyword id="KW-1185">Reference proteome</keyword>
<keyword id="KW-0677">Repeat</keyword>
<keyword id="KW-0732">Signal</keyword>
<keyword id="KW-0812">Transmembrane</keyword>
<keyword id="KW-1133">Transmembrane helix</keyword>
<reference key="1">
    <citation type="journal article" date="2012" name="Plant J.">
        <title>XIAO is involved in the control of organ size by contributing to the regulation of signaling and homeostasis of brassinosteroids and cell cycling in rice.</title>
        <authorList>
            <person name="Jiang Y."/>
            <person name="Bao L."/>
            <person name="Jeong S.Y."/>
            <person name="Kim S.K."/>
            <person name="Xu C."/>
            <person name="Li X."/>
            <person name="Zhang Q."/>
        </authorList>
    </citation>
    <scope>NUCLEOTIDE SEQUENCE [GENOMIC DNA]</scope>
    <scope>FUNCTION</scope>
    <scope>TISSUE SPECIFICITY</scope>
    <scope>DISRUPTION PHENOTYPE</scope>
    <source>
        <strain>cv. Zhonghua 11</strain>
    </source>
</reference>
<reference key="2">
    <citation type="journal article" date="2002" name="Nature">
        <title>Sequence and analysis of rice chromosome 4.</title>
        <authorList>
            <person name="Feng Q."/>
            <person name="Zhang Y."/>
            <person name="Hao P."/>
            <person name="Wang S."/>
            <person name="Fu G."/>
            <person name="Huang Y."/>
            <person name="Li Y."/>
            <person name="Zhu J."/>
            <person name="Liu Y."/>
            <person name="Hu X."/>
            <person name="Jia P."/>
            <person name="Zhang Y."/>
            <person name="Zhao Q."/>
            <person name="Ying K."/>
            <person name="Yu S."/>
            <person name="Tang Y."/>
            <person name="Weng Q."/>
            <person name="Zhang L."/>
            <person name="Lu Y."/>
            <person name="Mu J."/>
            <person name="Lu Y."/>
            <person name="Zhang L.S."/>
            <person name="Yu Z."/>
            <person name="Fan D."/>
            <person name="Liu X."/>
            <person name="Lu T."/>
            <person name="Li C."/>
            <person name="Wu Y."/>
            <person name="Sun T."/>
            <person name="Lei H."/>
            <person name="Li T."/>
            <person name="Hu H."/>
            <person name="Guan J."/>
            <person name="Wu M."/>
            <person name="Zhang R."/>
            <person name="Zhou B."/>
            <person name="Chen Z."/>
            <person name="Chen L."/>
            <person name="Jin Z."/>
            <person name="Wang R."/>
            <person name="Yin H."/>
            <person name="Cai Z."/>
            <person name="Ren S."/>
            <person name="Lv G."/>
            <person name="Gu W."/>
            <person name="Zhu G."/>
            <person name="Tu Y."/>
            <person name="Jia J."/>
            <person name="Zhang Y."/>
            <person name="Chen J."/>
            <person name="Kang H."/>
            <person name="Chen X."/>
            <person name="Shao C."/>
            <person name="Sun Y."/>
            <person name="Hu Q."/>
            <person name="Zhang X."/>
            <person name="Zhang W."/>
            <person name="Wang L."/>
            <person name="Ding C."/>
            <person name="Sheng H."/>
            <person name="Gu J."/>
            <person name="Chen S."/>
            <person name="Ni L."/>
            <person name="Zhu F."/>
            <person name="Chen W."/>
            <person name="Lan L."/>
            <person name="Lai Y."/>
            <person name="Cheng Z."/>
            <person name="Gu M."/>
            <person name="Jiang J."/>
            <person name="Li J."/>
            <person name="Hong G."/>
            <person name="Xue Y."/>
            <person name="Han B."/>
        </authorList>
    </citation>
    <scope>NUCLEOTIDE SEQUENCE [LARGE SCALE GENOMIC DNA]</scope>
    <source>
        <strain>cv. Nipponbare</strain>
    </source>
</reference>
<reference key="3">
    <citation type="journal article" date="2005" name="Nature">
        <title>The map-based sequence of the rice genome.</title>
        <authorList>
            <consortium name="International rice genome sequencing project (IRGSP)"/>
        </authorList>
    </citation>
    <scope>NUCLEOTIDE SEQUENCE [LARGE SCALE GENOMIC DNA]</scope>
    <source>
        <strain>cv. Nipponbare</strain>
    </source>
</reference>
<reference key="4">
    <citation type="journal article" date="2008" name="Nucleic Acids Res.">
        <title>The rice annotation project database (RAP-DB): 2008 update.</title>
        <authorList>
            <consortium name="The rice annotation project (RAP)"/>
        </authorList>
    </citation>
    <scope>GENOME REANNOTATION</scope>
    <source>
        <strain>cv. Nipponbare</strain>
    </source>
</reference>
<reference key="5">
    <citation type="journal article" date="2013" name="Rice">
        <title>Improvement of the Oryza sativa Nipponbare reference genome using next generation sequence and optical map data.</title>
        <authorList>
            <person name="Kawahara Y."/>
            <person name="de la Bastide M."/>
            <person name="Hamilton J.P."/>
            <person name="Kanamori H."/>
            <person name="McCombie W.R."/>
            <person name="Ouyang S."/>
            <person name="Schwartz D.C."/>
            <person name="Tanaka T."/>
            <person name="Wu J."/>
            <person name="Zhou S."/>
            <person name="Childs K.L."/>
            <person name="Davidson R.M."/>
            <person name="Lin H."/>
            <person name="Quesada-Ocampo L."/>
            <person name="Vaillancourt B."/>
            <person name="Sakai H."/>
            <person name="Lee S.S."/>
            <person name="Kim J."/>
            <person name="Numa H."/>
            <person name="Itoh T."/>
            <person name="Buell C.R."/>
            <person name="Matsumoto T."/>
        </authorList>
    </citation>
    <scope>GENOME REANNOTATION</scope>
    <source>
        <strain>cv. Nipponbare</strain>
    </source>
</reference>
<feature type="signal peptide" evidence="2">
    <location>
        <begin position="1"/>
        <end position="21"/>
    </location>
</feature>
<feature type="chain" id="PRO_5003523412" description="Probable inactive leucine-rich repeat receptor kinase XIAO">
    <location>
        <begin position="22"/>
        <end position="1157"/>
    </location>
</feature>
<feature type="transmembrane region" description="Helical" evidence="2">
    <location>
        <begin position="765"/>
        <end position="785"/>
    </location>
</feature>
<feature type="repeat" description="LRR 1" evidence="2">
    <location>
        <begin position="101"/>
        <end position="125"/>
    </location>
</feature>
<feature type="repeat" description="LRR 2" evidence="2">
    <location>
        <begin position="127"/>
        <end position="149"/>
    </location>
</feature>
<feature type="repeat" description="LRR 3" evidence="2">
    <location>
        <begin position="150"/>
        <end position="172"/>
    </location>
</feature>
<feature type="repeat" description="LRR 4" evidence="2">
    <location>
        <begin position="173"/>
        <end position="196"/>
    </location>
</feature>
<feature type="repeat" description="LRR 5" evidence="2">
    <location>
        <begin position="198"/>
        <end position="220"/>
    </location>
</feature>
<feature type="repeat" description="LRR 6" evidence="2">
    <location>
        <begin position="221"/>
        <end position="245"/>
    </location>
</feature>
<feature type="repeat" description="LRR 7" evidence="2">
    <location>
        <begin position="247"/>
        <end position="269"/>
    </location>
</feature>
<feature type="repeat" description="LRR 8" evidence="2">
    <location>
        <begin position="270"/>
        <end position="293"/>
    </location>
</feature>
<feature type="repeat" description="LRR 9" evidence="2">
    <location>
        <begin position="296"/>
        <end position="319"/>
    </location>
</feature>
<feature type="repeat" description="LRR 10" evidence="2">
    <location>
        <begin position="320"/>
        <end position="343"/>
    </location>
</feature>
<feature type="repeat" description="LRR 11" evidence="2">
    <location>
        <begin position="344"/>
        <end position="367"/>
    </location>
</feature>
<feature type="repeat" description="LRR 12" evidence="2">
    <location>
        <begin position="368"/>
        <end position="391"/>
    </location>
</feature>
<feature type="repeat" description="LRR 13" evidence="2">
    <location>
        <begin position="393"/>
        <end position="414"/>
    </location>
</feature>
<feature type="repeat" description="LRR 14" evidence="2">
    <location>
        <begin position="415"/>
        <end position="439"/>
    </location>
</feature>
<feature type="repeat" description="LRR 15" evidence="2">
    <location>
        <begin position="440"/>
        <end position="463"/>
    </location>
</feature>
<feature type="repeat" description="LRR 16" evidence="2">
    <location>
        <begin position="464"/>
        <end position="487"/>
    </location>
</feature>
<feature type="repeat" description="LRR 17" evidence="2">
    <location>
        <begin position="489"/>
        <end position="511"/>
    </location>
</feature>
<feature type="repeat" description="LRR 18" evidence="2">
    <location>
        <begin position="513"/>
        <end position="536"/>
    </location>
</feature>
<feature type="repeat" description="LRR 19" evidence="2">
    <location>
        <begin position="537"/>
        <end position="559"/>
    </location>
</feature>
<feature type="repeat" description="LRR 20" evidence="2">
    <location>
        <begin position="561"/>
        <end position="583"/>
    </location>
</feature>
<feature type="repeat" description="LRR 21" evidence="2">
    <location>
        <begin position="584"/>
        <end position="608"/>
    </location>
</feature>
<feature type="repeat" description="LRR 22" evidence="2">
    <location>
        <begin position="609"/>
        <end position="631"/>
    </location>
</feature>
<feature type="repeat" description="LRR 23" evidence="2">
    <location>
        <begin position="632"/>
        <end position="656"/>
    </location>
</feature>
<feature type="repeat" description="LRR 24" evidence="2">
    <location>
        <begin position="658"/>
        <end position="680"/>
    </location>
</feature>
<feature type="repeat" description="LRR 25" evidence="2">
    <location>
        <begin position="681"/>
        <end position="704"/>
    </location>
</feature>
<feature type="repeat" description="LRR 26" evidence="2">
    <location>
        <begin position="706"/>
        <end position="728"/>
    </location>
</feature>
<feature type="domain" description="Protein kinase" evidence="3">
    <location>
        <begin position="849"/>
        <end position="1144"/>
    </location>
</feature>
<feature type="region of interest" description="Disordered" evidence="5">
    <location>
        <begin position="804"/>
        <end position="825"/>
    </location>
</feature>
<feature type="binding site" evidence="3">
    <location>
        <begin position="855"/>
        <end position="863"/>
    </location>
    <ligand>
        <name>ATP</name>
        <dbReference type="ChEBI" id="CHEBI:30616"/>
    </ligand>
</feature>
<feature type="binding site" evidence="1">
    <location>
        <begin position="930"/>
        <end position="932"/>
    </location>
    <ligand>
        <name>ATP</name>
        <dbReference type="ChEBI" id="CHEBI:30616"/>
    </ligand>
</feature>
<feature type="binding site" evidence="1">
    <location>
        <begin position="936"/>
        <end position="939"/>
    </location>
    <ligand>
        <name>ATP</name>
        <dbReference type="ChEBI" id="CHEBI:30616"/>
    </ligand>
</feature>
<feature type="binding site" evidence="1">
    <location>
        <begin position="980"/>
        <end position="985"/>
    </location>
    <ligand>
        <name>ATP</name>
        <dbReference type="ChEBI" id="CHEBI:30616"/>
    </ligand>
</feature>
<feature type="binding site" evidence="1">
    <location>
        <position position="998"/>
    </location>
    <ligand>
        <name>ATP</name>
        <dbReference type="ChEBI" id="CHEBI:30616"/>
    </ligand>
</feature>
<feature type="glycosylation site" description="N-linked (GlcNAc...) asparagine" evidence="4">
    <location>
        <position position="58"/>
    </location>
</feature>
<feature type="glycosylation site" description="N-linked (GlcNAc...) asparagine" evidence="4">
    <location>
        <position position="149"/>
    </location>
</feature>
<feature type="glycosylation site" description="N-linked (GlcNAc...) asparagine" evidence="4">
    <location>
        <position position="192"/>
    </location>
</feature>
<feature type="glycosylation site" description="N-linked (GlcNAc...) asparagine" evidence="4">
    <location>
        <position position="204"/>
    </location>
</feature>
<feature type="glycosylation site" description="N-linked (GlcNAc...) asparagine" evidence="4">
    <location>
        <position position="244"/>
    </location>
</feature>
<feature type="glycosylation site" description="N-linked (GlcNAc...) asparagine" evidence="4">
    <location>
        <position position="296"/>
    </location>
</feature>
<feature type="glycosylation site" description="N-linked (GlcNAc...) asparagine" evidence="4">
    <location>
        <position position="438"/>
    </location>
</feature>
<feature type="glycosylation site" description="N-linked (GlcNAc...) asparagine" evidence="4">
    <location>
        <position position="465"/>
    </location>
</feature>
<feature type="glycosylation site" description="N-linked (GlcNAc...) asparagine" evidence="4">
    <location>
        <position position="494"/>
    </location>
</feature>
<feature type="glycosylation site" description="N-linked (GlcNAc...) asparagine" evidence="4">
    <location>
        <position position="524"/>
    </location>
</feature>
<feature type="glycosylation site" description="N-linked (GlcNAc...) asparagine" evidence="4">
    <location>
        <position position="567"/>
    </location>
</feature>
<feature type="glycosylation site" description="N-linked (GlcNAc...) asparagine" evidence="4">
    <location>
        <position position="607"/>
    </location>
</feature>
<feature type="glycosylation site" description="N-linked (GlcNAc...) asparagine" evidence="4">
    <location>
        <position position="610"/>
    </location>
</feature>
<feature type="glycosylation site" description="N-linked (GlcNAc...) asparagine" evidence="4">
    <location>
        <position position="655"/>
    </location>
</feature>
<feature type="glycosylation site" description="N-linked (GlcNAc...) asparagine" evidence="4">
    <location>
        <position position="679"/>
    </location>
</feature>
<feature type="glycosylation site" description="N-linked (GlcNAc...) asparagine" evidence="4">
    <location>
        <position position="692"/>
    </location>
</feature>
<feature type="glycosylation site" description="N-linked (GlcNAc...) asparagine" evidence="4">
    <location>
        <position position="711"/>
    </location>
</feature>
<feature type="sequence conflict" description="In Ref. 2; CAD41303." evidence="8" ref="2">
    <original>D</original>
    <variation>E</variation>
    <location>
        <position position="179"/>
    </location>
</feature>
<feature type="sequence conflict" description="In Ref. 2; CAD41303." evidence="8" ref="2">
    <original>SF</original>
    <variation>AV</variation>
    <location>
        <begin position="206"/>
        <end position="207"/>
    </location>
</feature>
<accession>G9LZD7</accession>
<accession>Q0JAU5</accession>
<accession>Q7XUH4</accession>
<sequence length="1157" mass="122421">MPPPPRLLFLLVMLLVVAAPGAPVFGANAPPEVKAEIDALLMFRSGLRDPYAAMSGWNASSPSAPCSWRGVACAAGTGRVVELALPKLRLSGAISPALSSLVYLEKLSLRSNSLSGTIPASLSRISSLRAVYLQYNSLSGPIPQSFLANLTNLQTFDVSGNLLSGPVPVSFPPSLKYLDLSSNAFSGTIPANVSASATSLQFLNLSFNRLRGTVPASLGTLQDLHYLWLDGNLLEGTIPSALSNCSALLHLSLQGNALRGILPPAVAAIPSLQILSVSRNRLTGAIPAAAFGGVGNSSLRIVQVGGNAFSQVDVPVSLGKDLQVVDLRANKLAGPFPSWLAGAGGLTVLDLSGNAFTGEVPPAVGQLTALQELRLGGNAFTGTVPAEIGRCGALQVLDLEDNRFSGEVPAALGGLRRLREVYLGGNSFSGQIPASLGNLSWLEALSTPGNRLTGDLPSELFVLGNLTFLDLSDNKLAGEIPPSIGNLAALQSLNLSGNSFSGRIPSNIGNLLNLRVLDLSGQKNLSGNLPAELFGLPQLQYVSLAGNSFSGDVPEGFSSLWSLRHLNLSVNSFTGSMPATYGYLPSLQVLSASHNRICGELPVELANCSNLTVLDLRSNQLTGPIPGDFARLGELEELDLSHNQLSRKIPPEISNCSSLVTLKLDDNHLGGEIPASLSNLSKLQTLDLSSNNLTGSIPASLAQIPGMLSLNVSQNELSGEIPAMLGSRFGTPSVFASNPNLCGPPLENECSAYRQHRRRQRLQRLALLIGVVAATVLLLVLFCCCCVYSLLRWRRRFIEKRDGVKKRRRSPGRGSGSSGTSTDSVSQPKLIMFNSRITYADTVEATRQFDEENVLSRGRHGLVFKACYNDGTVLAILRLPSTSSDGAVVIEEGSFRKEAESLGKVKHRNLTVLRGYYAGPPPDVRLLVYDYMPNGNLATLLQEASHQDGHILNWPMRHLIALGVSRGLAFLHQSGVVHGDVKPQNILFDADFEPHLSDFGLEPMVVTAGAAAAAAAASTSATTTVGSLGYVAPDAAAAGQATREGDVYSFGIVLLELLTGRRPGMFAGEDEDIVKWVKRQLQRGAVAELLEPGLLELDPESSEWEEFLLGIKVGLLCTAPDPLDRPAMGDVVFMLEGCRVGPDIPSSADPTSQPSPA</sequence>
<proteinExistence type="evidence at transcript level"/>